<dbReference type="EMBL" id="X57547">
    <property type="protein sequence ID" value="CAA40771.1"/>
    <property type="molecule type" value="Genomic_DNA"/>
</dbReference>
<dbReference type="EMBL" id="J04077">
    <property type="protein sequence ID" value="AAA22703.1"/>
    <property type="molecule type" value="Genomic_DNA"/>
</dbReference>
<dbReference type="EMBL" id="AL009126">
    <property type="protein sequence ID" value="CAB13407.1"/>
    <property type="molecule type" value="Genomic_DNA"/>
</dbReference>
<dbReference type="PIR" id="A30171">
    <property type="entry name" value="A30202"/>
</dbReference>
<dbReference type="RefSeq" id="NP_389416.1">
    <property type="nucleotide sequence ID" value="NC_000964.3"/>
</dbReference>
<dbReference type="RefSeq" id="WP_009967190.1">
    <property type="nucleotide sequence ID" value="NZ_OZ025638.1"/>
</dbReference>
<dbReference type="SMR" id="P19940"/>
<dbReference type="FunCoup" id="P19940">
    <property type="interactions" value="21"/>
</dbReference>
<dbReference type="STRING" id="224308.BSU15330"/>
<dbReference type="PaxDb" id="224308-BSU15330"/>
<dbReference type="EnsemblBacteria" id="CAB13407">
    <property type="protein sequence ID" value="CAB13407"/>
    <property type="gene ID" value="BSU_15330"/>
</dbReference>
<dbReference type="GeneID" id="76978044"/>
<dbReference type="GeneID" id="939953"/>
<dbReference type="KEGG" id="bsu:BSU15330"/>
<dbReference type="PATRIC" id="fig|224308.179.peg.1671"/>
<dbReference type="eggNOG" id="COG1191">
    <property type="taxonomic scope" value="Bacteria"/>
</dbReference>
<dbReference type="InParanoid" id="P19940"/>
<dbReference type="OrthoDB" id="9809557at2"/>
<dbReference type="PhylomeDB" id="P19940"/>
<dbReference type="BioCyc" id="BSUB:BSU15330-MONOMER"/>
<dbReference type="Proteomes" id="UP000001570">
    <property type="component" value="Chromosome"/>
</dbReference>
<dbReference type="GO" id="GO:0003677">
    <property type="term" value="F:DNA binding"/>
    <property type="evidence" value="ECO:0007669"/>
    <property type="project" value="UniProtKB-KW"/>
</dbReference>
<dbReference type="GO" id="GO:0016987">
    <property type="term" value="F:sigma factor activity"/>
    <property type="evidence" value="ECO:0007669"/>
    <property type="project" value="UniProtKB-KW"/>
</dbReference>
<dbReference type="GO" id="GO:0006352">
    <property type="term" value="P:DNA-templated transcription initiation"/>
    <property type="evidence" value="ECO:0007669"/>
    <property type="project" value="InterPro"/>
</dbReference>
<dbReference type="GO" id="GO:0030435">
    <property type="term" value="P:sporulation resulting in formation of a cellular spore"/>
    <property type="evidence" value="ECO:0007669"/>
    <property type="project" value="UniProtKB-KW"/>
</dbReference>
<dbReference type="CDD" id="cd06171">
    <property type="entry name" value="Sigma70_r4"/>
    <property type="match status" value="1"/>
</dbReference>
<dbReference type="FunFam" id="1.20.120.1810:FF:000002">
    <property type="entry name" value="RNA polymerase sigma factor"/>
    <property type="match status" value="1"/>
</dbReference>
<dbReference type="Gene3D" id="1.20.120.1810">
    <property type="match status" value="1"/>
</dbReference>
<dbReference type="Gene3D" id="1.20.140.160">
    <property type="match status" value="1"/>
</dbReference>
<dbReference type="InterPro" id="IPR014284">
    <property type="entry name" value="RNA_pol_sigma-70_dom"/>
</dbReference>
<dbReference type="InterPro" id="IPR014322">
    <property type="entry name" value="RNA_pol_sigma-B/F/G"/>
</dbReference>
<dbReference type="InterPro" id="IPR014212">
    <property type="entry name" value="RNA_pol_sigma-G"/>
</dbReference>
<dbReference type="InterPro" id="IPR000943">
    <property type="entry name" value="RNA_pol_sigma70"/>
</dbReference>
<dbReference type="InterPro" id="IPR007627">
    <property type="entry name" value="RNA_pol_sigma70_r2"/>
</dbReference>
<dbReference type="InterPro" id="IPR007624">
    <property type="entry name" value="RNA_pol_sigma70_r3"/>
</dbReference>
<dbReference type="InterPro" id="IPR007630">
    <property type="entry name" value="RNA_pol_sigma70_r4"/>
</dbReference>
<dbReference type="InterPro" id="IPR013325">
    <property type="entry name" value="RNA_pol_sigma_r2"/>
</dbReference>
<dbReference type="InterPro" id="IPR013324">
    <property type="entry name" value="RNA_pol_sigma_r3/r4-like"/>
</dbReference>
<dbReference type="InterPro" id="IPR050239">
    <property type="entry name" value="Sigma-70_RNA_pol_init_factors"/>
</dbReference>
<dbReference type="NCBIfam" id="NF006071">
    <property type="entry name" value="PRK08215.1"/>
    <property type="match status" value="1"/>
</dbReference>
<dbReference type="NCBIfam" id="TIGR02980">
    <property type="entry name" value="SigBFG"/>
    <property type="match status" value="1"/>
</dbReference>
<dbReference type="NCBIfam" id="TIGR02937">
    <property type="entry name" value="sigma70-ECF"/>
    <property type="match status" value="1"/>
</dbReference>
<dbReference type="NCBIfam" id="TIGR02850">
    <property type="entry name" value="spore_sigG"/>
    <property type="match status" value="1"/>
</dbReference>
<dbReference type="PANTHER" id="PTHR30603">
    <property type="entry name" value="RNA POLYMERASE SIGMA FACTOR RPO"/>
    <property type="match status" value="1"/>
</dbReference>
<dbReference type="PANTHER" id="PTHR30603:SF17">
    <property type="entry name" value="RNA POLYMERASE SIGMA-G FACTOR"/>
    <property type="match status" value="1"/>
</dbReference>
<dbReference type="Pfam" id="PF04542">
    <property type="entry name" value="Sigma70_r2"/>
    <property type="match status" value="1"/>
</dbReference>
<dbReference type="Pfam" id="PF04539">
    <property type="entry name" value="Sigma70_r3"/>
    <property type="match status" value="1"/>
</dbReference>
<dbReference type="Pfam" id="PF04545">
    <property type="entry name" value="Sigma70_r4"/>
    <property type="match status" value="1"/>
</dbReference>
<dbReference type="PIRSF" id="PIRSF000770">
    <property type="entry name" value="RNA_pol_sigma-SigE/K"/>
    <property type="match status" value="1"/>
</dbReference>
<dbReference type="PRINTS" id="PR00046">
    <property type="entry name" value="SIGMA70FCT"/>
</dbReference>
<dbReference type="SUPFAM" id="SSF88946">
    <property type="entry name" value="Sigma2 domain of RNA polymerase sigma factors"/>
    <property type="match status" value="1"/>
</dbReference>
<dbReference type="SUPFAM" id="SSF88659">
    <property type="entry name" value="Sigma3 and sigma4 domains of RNA polymerase sigma factors"/>
    <property type="match status" value="2"/>
</dbReference>
<dbReference type="PROSITE" id="PS00715">
    <property type="entry name" value="SIGMA70_1"/>
    <property type="match status" value="1"/>
</dbReference>
<dbReference type="PROSITE" id="PS00716">
    <property type="entry name" value="SIGMA70_2"/>
    <property type="match status" value="1"/>
</dbReference>
<protein>
    <recommendedName>
        <fullName>RNA polymerase sigma-G factor</fullName>
    </recommendedName>
    <alternativeName>
        <fullName>Stage III sporulation protein G</fullName>
    </alternativeName>
</protein>
<proteinExistence type="evidence at protein level"/>
<feature type="chain" id="PRO_0000093945" description="RNA polymerase sigma-G factor">
    <location>
        <begin position="1"/>
        <end position="260"/>
    </location>
</feature>
<feature type="DNA-binding region" description="H-T-H motif" evidence="1">
    <location>
        <begin position="229"/>
        <end position="248"/>
    </location>
</feature>
<feature type="region of interest" description="Recognizes anti-sigma-G factor Gin (csfB)" evidence="3">
    <location>
        <begin position="1"/>
        <end position="71"/>
    </location>
</feature>
<feature type="short sequence motif" description="Polymerase core binding">
    <location>
        <begin position="67"/>
        <end position="80"/>
    </location>
</feature>
<comment type="function">
    <text evidence="3">Sigma factors are initiation factors that promote the attachment of RNA polymerase to specific initiation sites and are then released (PubMed:18208527). This sigma factor is responsible for the expression of sporulation specific genes in the forespore (PubMed:18208527).</text>
</comment>
<comment type="activity regulation">
    <text evidence="2 4">Activity repressed by anti-sigma-G factor Gin (csfB) and Lon protease during the early stages of forespore development (PubMed:17921305). When both Gin and sigma-G are expressed in E.coli Gin inhibits sigma-G activity, strongly suggesting Gin inhibits by direct physical interaction (PubMed:19497328).</text>
</comment>
<comment type="subunit">
    <text evidence="3 4">Interacts with anti-sigma-G factor Gin (csfB) (PubMed:18208527, PubMed:19497328).</text>
</comment>
<comment type="developmental stage">
    <text evidence="3">Active only in the forespore (PubMed:18208527).</text>
</comment>
<comment type="induction">
    <text evidence="3">Expressed and active 2 hours after sporulation starts (at protein level); stimulates its own transcription (PubMed:18208527).</text>
</comment>
<comment type="domain">
    <text evidence="3">Recognition of anti-sigma-G factor Gin (csfB) occurs via the first 71 residues (PubMed:18208527).</text>
</comment>
<comment type="similarity">
    <text evidence="5">Belongs to the sigma-70 factor family.</text>
</comment>
<keyword id="KW-0238">DNA-binding</keyword>
<keyword id="KW-1185">Reference proteome</keyword>
<keyword id="KW-0731">Sigma factor</keyword>
<keyword id="KW-0749">Sporulation</keyword>
<keyword id="KW-0804">Transcription</keyword>
<keyword id="KW-0805">Transcription regulation</keyword>
<accession>P19940</accession>
<name>RPSG_BACSU</name>
<gene>
    <name type="primary">sigG</name>
    <name type="synonym">spoIIIG</name>
    <name type="ordered locus">BSU15330</name>
</gene>
<evidence type="ECO:0000250" key="1"/>
<evidence type="ECO:0000269" key="2">
    <source>
    </source>
</evidence>
<evidence type="ECO:0000269" key="3">
    <source>
    </source>
</evidence>
<evidence type="ECO:0000269" key="4">
    <source>
    </source>
</evidence>
<evidence type="ECO:0000305" key="5"/>
<organism>
    <name type="scientific">Bacillus subtilis (strain 168)</name>
    <dbReference type="NCBI Taxonomy" id="224308"/>
    <lineage>
        <taxon>Bacteria</taxon>
        <taxon>Bacillati</taxon>
        <taxon>Bacillota</taxon>
        <taxon>Bacilli</taxon>
        <taxon>Bacillales</taxon>
        <taxon>Bacillaceae</taxon>
        <taxon>Bacillus</taxon>
    </lineage>
</organism>
<reference key="1">
    <citation type="journal article" date="1989" name="Genes Dev.">
        <title>Tandem genes encoding sigma-factors for consecutive steps of development in Bacillus subtilis.</title>
        <authorList>
            <person name="Karmazyn-Campelli C."/>
            <person name="Bonamy C."/>
            <person name="Savelli B."/>
            <person name="Stragier P."/>
        </authorList>
    </citation>
    <scope>NUCLEOTIDE SEQUENCE [GENOMIC DNA]</scope>
</reference>
<reference key="2">
    <citation type="journal article" date="1988" name="Proc. Natl. Acad. Sci. U.S.A.">
        <title>Two developmental genes encoding sigma factor homologs are arranged in tandem in Bacillus subtilis.</title>
        <authorList>
            <person name="Masuda E.S."/>
            <person name="Anaguchi H."/>
            <person name="Yamada K."/>
            <person name="Kobayashi Y."/>
        </authorList>
    </citation>
    <scope>NUCLEOTIDE SEQUENCE [GENOMIC DNA]</scope>
</reference>
<reference key="3">
    <citation type="journal article" date="1997" name="Nature">
        <title>The complete genome sequence of the Gram-positive bacterium Bacillus subtilis.</title>
        <authorList>
            <person name="Kunst F."/>
            <person name="Ogasawara N."/>
            <person name="Moszer I."/>
            <person name="Albertini A.M."/>
            <person name="Alloni G."/>
            <person name="Azevedo V."/>
            <person name="Bertero M.G."/>
            <person name="Bessieres P."/>
            <person name="Bolotin A."/>
            <person name="Borchert S."/>
            <person name="Borriss R."/>
            <person name="Boursier L."/>
            <person name="Brans A."/>
            <person name="Braun M."/>
            <person name="Brignell S.C."/>
            <person name="Bron S."/>
            <person name="Brouillet S."/>
            <person name="Bruschi C.V."/>
            <person name="Caldwell B."/>
            <person name="Capuano V."/>
            <person name="Carter N.M."/>
            <person name="Choi S.-K."/>
            <person name="Codani J.-J."/>
            <person name="Connerton I.F."/>
            <person name="Cummings N.J."/>
            <person name="Daniel R.A."/>
            <person name="Denizot F."/>
            <person name="Devine K.M."/>
            <person name="Duesterhoeft A."/>
            <person name="Ehrlich S.D."/>
            <person name="Emmerson P.T."/>
            <person name="Entian K.-D."/>
            <person name="Errington J."/>
            <person name="Fabret C."/>
            <person name="Ferrari E."/>
            <person name="Foulger D."/>
            <person name="Fritz C."/>
            <person name="Fujita M."/>
            <person name="Fujita Y."/>
            <person name="Fuma S."/>
            <person name="Galizzi A."/>
            <person name="Galleron N."/>
            <person name="Ghim S.-Y."/>
            <person name="Glaser P."/>
            <person name="Goffeau A."/>
            <person name="Golightly E.J."/>
            <person name="Grandi G."/>
            <person name="Guiseppi G."/>
            <person name="Guy B.J."/>
            <person name="Haga K."/>
            <person name="Haiech J."/>
            <person name="Harwood C.R."/>
            <person name="Henaut A."/>
            <person name="Hilbert H."/>
            <person name="Holsappel S."/>
            <person name="Hosono S."/>
            <person name="Hullo M.-F."/>
            <person name="Itaya M."/>
            <person name="Jones L.-M."/>
            <person name="Joris B."/>
            <person name="Karamata D."/>
            <person name="Kasahara Y."/>
            <person name="Klaerr-Blanchard M."/>
            <person name="Klein C."/>
            <person name="Kobayashi Y."/>
            <person name="Koetter P."/>
            <person name="Koningstein G."/>
            <person name="Krogh S."/>
            <person name="Kumano M."/>
            <person name="Kurita K."/>
            <person name="Lapidus A."/>
            <person name="Lardinois S."/>
            <person name="Lauber J."/>
            <person name="Lazarevic V."/>
            <person name="Lee S.-M."/>
            <person name="Levine A."/>
            <person name="Liu H."/>
            <person name="Masuda S."/>
            <person name="Mauel C."/>
            <person name="Medigue C."/>
            <person name="Medina N."/>
            <person name="Mellado R.P."/>
            <person name="Mizuno M."/>
            <person name="Moestl D."/>
            <person name="Nakai S."/>
            <person name="Noback M."/>
            <person name="Noone D."/>
            <person name="O'Reilly M."/>
            <person name="Ogawa K."/>
            <person name="Ogiwara A."/>
            <person name="Oudega B."/>
            <person name="Park S.-H."/>
            <person name="Parro V."/>
            <person name="Pohl T.M."/>
            <person name="Portetelle D."/>
            <person name="Porwollik S."/>
            <person name="Prescott A.M."/>
            <person name="Presecan E."/>
            <person name="Pujic P."/>
            <person name="Purnelle B."/>
            <person name="Rapoport G."/>
            <person name="Rey M."/>
            <person name="Reynolds S."/>
            <person name="Rieger M."/>
            <person name="Rivolta C."/>
            <person name="Rocha E."/>
            <person name="Roche B."/>
            <person name="Rose M."/>
            <person name="Sadaie Y."/>
            <person name="Sato T."/>
            <person name="Scanlan E."/>
            <person name="Schleich S."/>
            <person name="Schroeter R."/>
            <person name="Scoffone F."/>
            <person name="Sekiguchi J."/>
            <person name="Sekowska A."/>
            <person name="Seror S.J."/>
            <person name="Serror P."/>
            <person name="Shin B.-S."/>
            <person name="Soldo B."/>
            <person name="Sorokin A."/>
            <person name="Tacconi E."/>
            <person name="Takagi T."/>
            <person name="Takahashi H."/>
            <person name="Takemaru K."/>
            <person name="Takeuchi M."/>
            <person name="Tamakoshi A."/>
            <person name="Tanaka T."/>
            <person name="Terpstra P."/>
            <person name="Tognoni A."/>
            <person name="Tosato V."/>
            <person name="Uchiyama S."/>
            <person name="Vandenbol M."/>
            <person name="Vannier F."/>
            <person name="Vassarotti A."/>
            <person name="Viari A."/>
            <person name="Wambutt R."/>
            <person name="Wedler E."/>
            <person name="Wedler H."/>
            <person name="Weitzenegger T."/>
            <person name="Winters P."/>
            <person name="Wipat A."/>
            <person name="Yamamoto H."/>
            <person name="Yamane K."/>
            <person name="Yasumoto K."/>
            <person name="Yata K."/>
            <person name="Yoshida K."/>
            <person name="Yoshikawa H.-F."/>
            <person name="Zumstein E."/>
            <person name="Yoshikawa H."/>
            <person name="Danchin A."/>
        </authorList>
    </citation>
    <scope>NUCLEOTIDE SEQUENCE [LARGE SCALE GENOMIC DNA]</scope>
    <source>
        <strain>168</strain>
    </source>
</reference>
<reference key="4">
    <citation type="journal article" date="2007" name="J. Bacteriol.">
        <title>Expression of the sigmaF-directed csfB locus prevents premature appearance of sigmaG activity during sporulation of Bacillus subtilis.</title>
        <authorList>
            <person name="Chary V.K."/>
            <person name="Xenopoulos P."/>
            <person name="Piggot P.J."/>
        </authorList>
    </citation>
    <scope>ACTIVITY REGULATION</scope>
    <source>
        <strain>168 / BR151</strain>
    </source>
</reference>
<reference key="5">
    <citation type="journal article" date="2008" name="Mol. Microbiol.">
        <title>How the early sporulation sigma factor sigmaF delays the switch to late development in Bacillus subtilis.</title>
        <authorList>
            <person name="Karmazyn-Campelli C."/>
            <person name="Rhayat L."/>
            <person name="Carballido-Lopez R."/>
            <person name="Duperrier S."/>
            <person name="Frandsen N."/>
            <person name="Stragier P."/>
        </authorList>
    </citation>
    <scope>FUNCTION</scope>
    <scope>INTERACTION WITH GIN</scope>
    <scope>DEVELOPMENTAL STAGE</scope>
    <scope>INDUCTION</scope>
    <scope>DOMAIN</scope>
    <source>
        <strain>168 / JH642</strain>
    </source>
</reference>
<reference key="6">
    <citation type="journal article" date="2009" name="J. Mol. Biol.">
        <title>Genetic dissection of an inhibitor of the sporulation sigma factor sigma(G).</title>
        <authorList>
            <person name="Rhayat L."/>
            <person name="Duperrier S."/>
            <person name="Carballido-Lopez R."/>
            <person name="Pellegrini O."/>
            <person name="Stragier P."/>
        </authorList>
    </citation>
    <scope>ACTIVITY REGULATION</scope>
    <scope>INTERACTION WITH SIGMA-G FACTOR</scope>
</reference>
<sequence>MSRNKVEICGVDTSKLPVLKNEEMRKLFRQLQDEGDDSAREKLVNGNLRLVLSVIQRFNNRGEYVDDLFQVGCIGLMKSIDNFDLSHNVKFSTYAVPMIIGEIRRYLRDNNPIRVSRSLRDIAYKALQVRERLISETSKEPTAEDIAKVLEVPHEEIVFALDAIQDPVSLFEPIYNDGGDPIYVMDQISDERNTDSQWIEELALKEGMRRLNDREKMILRKRFFQGKTQMEVAEEIGISQAQVSRLEKAAIKQMNKNIHQ</sequence>